<comment type="function">
    <text evidence="1">Binds directly to 23S ribosomal RNA and is necessary for the in vitro assembly process of the 50S ribosomal subunit. It is not involved in the protein synthesizing functions of that subunit.</text>
</comment>
<comment type="similarity">
    <text evidence="1">Belongs to the bacterial ribosomal protein bL20 family.</text>
</comment>
<reference key="1">
    <citation type="journal article" date="2009" name="J. Bacteriol.">
        <title>Complete genome sequence of Haemophilus parasuis SH0165.</title>
        <authorList>
            <person name="Yue M."/>
            <person name="Yang F."/>
            <person name="Yang J."/>
            <person name="Bei W."/>
            <person name="Cai X."/>
            <person name="Chen L."/>
            <person name="Dong J."/>
            <person name="Zhou R."/>
            <person name="Jin M."/>
            <person name="Jin Q."/>
            <person name="Chen H."/>
        </authorList>
    </citation>
    <scope>NUCLEOTIDE SEQUENCE [LARGE SCALE GENOMIC DNA]</scope>
    <source>
        <strain>SH0165</strain>
    </source>
</reference>
<accession>B8F7W4</accession>
<feature type="chain" id="PRO_1000193963" description="Large ribosomal subunit protein bL20">
    <location>
        <begin position="1"/>
        <end position="117"/>
    </location>
</feature>
<name>RL20_GLAP5</name>
<sequence length="117" mass="13283">MARVKRGVIARARHKKVLKAAKGYYGARSRVYRVAFQAVVKAAQYAYRDRRQRKRQFRQLWIARINAAARQNGLSYSKFINGLKKASVEIDRKILADIAVFDKVAFAALVAKAKSAL</sequence>
<gene>
    <name evidence="1" type="primary">rplT</name>
    <name type="ordered locus">HAPS_1932</name>
</gene>
<organism>
    <name type="scientific">Glaesserella parasuis serovar 5 (strain SH0165)</name>
    <name type="common">Haemophilus parasuis</name>
    <dbReference type="NCBI Taxonomy" id="557723"/>
    <lineage>
        <taxon>Bacteria</taxon>
        <taxon>Pseudomonadati</taxon>
        <taxon>Pseudomonadota</taxon>
        <taxon>Gammaproteobacteria</taxon>
        <taxon>Pasteurellales</taxon>
        <taxon>Pasteurellaceae</taxon>
        <taxon>Glaesserella</taxon>
    </lineage>
</organism>
<keyword id="KW-1185">Reference proteome</keyword>
<keyword id="KW-0687">Ribonucleoprotein</keyword>
<keyword id="KW-0689">Ribosomal protein</keyword>
<keyword id="KW-0694">RNA-binding</keyword>
<keyword id="KW-0699">rRNA-binding</keyword>
<proteinExistence type="inferred from homology"/>
<dbReference type="EMBL" id="CP001321">
    <property type="protein sequence ID" value="ACL33416.1"/>
    <property type="molecule type" value="Genomic_DNA"/>
</dbReference>
<dbReference type="RefSeq" id="WP_005714486.1">
    <property type="nucleotide sequence ID" value="NC_011852.1"/>
</dbReference>
<dbReference type="SMR" id="B8F7W4"/>
<dbReference type="STRING" id="557723.HAPS_1932"/>
<dbReference type="GeneID" id="66617908"/>
<dbReference type="KEGG" id="hap:HAPS_1932"/>
<dbReference type="HOGENOM" id="CLU_123265_0_1_6"/>
<dbReference type="Proteomes" id="UP000006743">
    <property type="component" value="Chromosome"/>
</dbReference>
<dbReference type="GO" id="GO:1990904">
    <property type="term" value="C:ribonucleoprotein complex"/>
    <property type="evidence" value="ECO:0007669"/>
    <property type="project" value="UniProtKB-KW"/>
</dbReference>
<dbReference type="GO" id="GO:0005840">
    <property type="term" value="C:ribosome"/>
    <property type="evidence" value="ECO:0007669"/>
    <property type="project" value="UniProtKB-KW"/>
</dbReference>
<dbReference type="GO" id="GO:0019843">
    <property type="term" value="F:rRNA binding"/>
    <property type="evidence" value="ECO:0007669"/>
    <property type="project" value="UniProtKB-UniRule"/>
</dbReference>
<dbReference type="GO" id="GO:0003735">
    <property type="term" value="F:structural constituent of ribosome"/>
    <property type="evidence" value="ECO:0007669"/>
    <property type="project" value="InterPro"/>
</dbReference>
<dbReference type="GO" id="GO:0000027">
    <property type="term" value="P:ribosomal large subunit assembly"/>
    <property type="evidence" value="ECO:0007669"/>
    <property type="project" value="UniProtKB-UniRule"/>
</dbReference>
<dbReference type="GO" id="GO:0006412">
    <property type="term" value="P:translation"/>
    <property type="evidence" value="ECO:0007669"/>
    <property type="project" value="InterPro"/>
</dbReference>
<dbReference type="CDD" id="cd07026">
    <property type="entry name" value="Ribosomal_L20"/>
    <property type="match status" value="1"/>
</dbReference>
<dbReference type="FunFam" id="1.10.1900.20:FF:000001">
    <property type="entry name" value="50S ribosomal protein L20"/>
    <property type="match status" value="1"/>
</dbReference>
<dbReference type="Gene3D" id="6.10.160.10">
    <property type="match status" value="1"/>
</dbReference>
<dbReference type="Gene3D" id="1.10.1900.20">
    <property type="entry name" value="Ribosomal protein L20"/>
    <property type="match status" value="1"/>
</dbReference>
<dbReference type="HAMAP" id="MF_00382">
    <property type="entry name" value="Ribosomal_bL20"/>
    <property type="match status" value="1"/>
</dbReference>
<dbReference type="InterPro" id="IPR005813">
    <property type="entry name" value="Ribosomal_bL20"/>
</dbReference>
<dbReference type="InterPro" id="IPR049946">
    <property type="entry name" value="RIBOSOMAL_L20_CS"/>
</dbReference>
<dbReference type="InterPro" id="IPR035566">
    <property type="entry name" value="Ribosomal_protein_bL20_C"/>
</dbReference>
<dbReference type="NCBIfam" id="TIGR01032">
    <property type="entry name" value="rplT_bact"/>
    <property type="match status" value="1"/>
</dbReference>
<dbReference type="PANTHER" id="PTHR10986">
    <property type="entry name" value="39S RIBOSOMAL PROTEIN L20"/>
    <property type="match status" value="1"/>
</dbReference>
<dbReference type="Pfam" id="PF00453">
    <property type="entry name" value="Ribosomal_L20"/>
    <property type="match status" value="1"/>
</dbReference>
<dbReference type="PRINTS" id="PR00062">
    <property type="entry name" value="RIBOSOMALL20"/>
</dbReference>
<dbReference type="SUPFAM" id="SSF74731">
    <property type="entry name" value="Ribosomal protein L20"/>
    <property type="match status" value="1"/>
</dbReference>
<dbReference type="PROSITE" id="PS00937">
    <property type="entry name" value="RIBOSOMAL_L20"/>
    <property type="match status" value="1"/>
</dbReference>
<protein>
    <recommendedName>
        <fullName evidence="1">Large ribosomal subunit protein bL20</fullName>
    </recommendedName>
    <alternativeName>
        <fullName evidence="2">50S ribosomal protein L20</fullName>
    </alternativeName>
</protein>
<evidence type="ECO:0000255" key="1">
    <source>
        <dbReference type="HAMAP-Rule" id="MF_00382"/>
    </source>
</evidence>
<evidence type="ECO:0000305" key="2"/>